<dbReference type="EMBL" id="AY596939">
    <property type="protein sequence ID" value="AAT97261.1"/>
    <property type="molecule type" value="mRNA"/>
</dbReference>
<dbReference type="SMR" id="Q53B47"/>
<dbReference type="GO" id="GO:0005576">
    <property type="term" value="C:extracellular region"/>
    <property type="evidence" value="ECO:0007669"/>
    <property type="project" value="UniProtKB-SubCell"/>
</dbReference>
<dbReference type="GO" id="GO:0030550">
    <property type="term" value="F:acetylcholine receptor inhibitor activity"/>
    <property type="evidence" value="ECO:0007669"/>
    <property type="project" value="UniProtKB-KW"/>
</dbReference>
<dbReference type="GO" id="GO:0099106">
    <property type="term" value="F:ion channel regulator activity"/>
    <property type="evidence" value="ECO:0007669"/>
    <property type="project" value="UniProtKB-KW"/>
</dbReference>
<dbReference type="GO" id="GO:0090729">
    <property type="term" value="F:toxin activity"/>
    <property type="evidence" value="ECO:0007669"/>
    <property type="project" value="UniProtKB-KW"/>
</dbReference>
<dbReference type="CDD" id="cd00206">
    <property type="entry name" value="TFP_snake_toxin"/>
    <property type="match status" value="1"/>
</dbReference>
<dbReference type="Gene3D" id="2.10.60.10">
    <property type="entry name" value="CD59"/>
    <property type="match status" value="1"/>
</dbReference>
<dbReference type="InterPro" id="IPR003571">
    <property type="entry name" value="Snake_3FTx"/>
</dbReference>
<dbReference type="InterPro" id="IPR045860">
    <property type="entry name" value="Snake_toxin-like_sf"/>
</dbReference>
<dbReference type="InterPro" id="IPR054131">
    <property type="entry name" value="Toxin_cobra-type"/>
</dbReference>
<dbReference type="Pfam" id="PF21947">
    <property type="entry name" value="Toxin_cobra-type"/>
    <property type="match status" value="1"/>
</dbReference>
<dbReference type="SUPFAM" id="SSF57302">
    <property type="entry name" value="Snake toxin-like"/>
    <property type="match status" value="1"/>
</dbReference>
<feature type="signal peptide" evidence="3">
    <location>
        <begin position="1"/>
        <end position="21"/>
    </location>
</feature>
<feature type="chain" id="PRO_5000093331" description="Short neurotoxin OH-5" evidence="6">
    <location>
        <begin position="22"/>
        <end position="78"/>
    </location>
</feature>
<feature type="site" description="Important residue for inhibition of muscle alpha-1-beta-1-delta-epsilon (CHRNA1-CHRNB1-CHRND-CHRNE) and neuronal alpha-3-beta-2/CHRNA3-CHRNB2 nAChR" evidence="2">
    <location>
        <position position="28"/>
    </location>
</feature>
<feature type="site" description="Important residue for inhibition of muscle alpha-1-beta-1-delta-epsilon (CHRNA1-CHRNB1-CHRND-CHRNE) and neuronal alpha-3-beta-2/CHRNA3-CHRNB2 nAChR" evidence="2">
    <location>
        <position position="43"/>
    </location>
</feature>
<feature type="site" description="Key residue for inhibition of muscle alpha-1-beta-1-delta-epsilon (CHRNA1-CHRNB1-CHRND-CHRNE) nAChR" evidence="2">
    <location>
        <position position="44"/>
    </location>
</feature>
<feature type="site" description="Important residue for inhibition of muscle alpha-1-beta-1-delta-epsilon (CHRNA1-CHRNB1-CHRND-CHRNE) nAChR" evidence="2">
    <location>
        <position position="45"/>
    </location>
</feature>
<feature type="site" description="Key residue for inhibition of muscle alpha-1-beta-1-delta-epsilon (CHRNA1-CHRNB1-CHRND-CHRNE) and important for inhibition of neuronal alpha-3-beta-2/CHRNA3-CHRNB2 nAChR" evidence="2">
    <location>
        <position position="46"/>
    </location>
</feature>
<feature type="site" description="Important residue for inhibition of muscle alpha-1-beta-1-delta-epsilon (CHRNA1-CHRNB1-CHRND-CHRNE) nAChR" evidence="2">
    <location>
        <position position="47"/>
    </location>
</feature>
<feature type="site" description="Key residue for inhibition of muscle alpha-1-beta-1-delta-epsilon (CHRNA1-CHRNB1-CHRND-CHRNE) and important residue for inhibition of neuronal alpha-3-beta-2/CHRNA3-CHRNB2 nAChR" evidence="2">
    <location>
        <position position="48"/>
    </location>
</feature>
<feature type="site" description="Important residue for inhibition of muscle alpha-1-beta-1-delta-epsilon (CHRNA1-CHRNB1-CHRND-CHRNE) and neuronal alpha-3-beta-2/CHRNA3-CHRNB2 nAChR" evidence="2">
    <location>
        <position position="51"/>
    </location>
</feature>
<feature type="site" description="Important residue for inhibition of muscle alpha-1-beta-1-delta-epsilon (CHRNA1-CHRNB1-CHRND-CHRNE) and neuronal alpha-3-beta-2/CHRNA3-CHRNB2 nAChR" evidence="2">
    <location>
        <position position="66"/>
    </location>
</feature>
<feature type="site" description="Important residue for interaction with muscle alpha-1-beta-1-delta-epsilon (CHRNA1-CHRNB1-CHRND-CHRNE) and neuronal alpha-3-beta-2/CHRNA3-CHRNB2 nAChR" evidence="2">
    <location>
        <position position="67"/>
    </location>
</feature>
<feature type="disulfide bond" evidence="1">
    <location>
        <begin position="24"/>
        <end position="40"/>
    </location>
</feature>
<feature type="disulfide bond" evidence="1">
    <location>
        <begin position="33"/>
        <end position="58"/>
    </location>
</feature>
<feature type="disulfide bond" evidence="1">
    <location>
        <begin position="62"/>
        <end position="70"/>
    </location>
</feature>
<feature type="disulfide bond" evidence="1">
    <location>
        <begin position="71"/>
        <end position="76"/>
    </location>
</feature>
<reference key="1">
    <citation type="journal article" date="2004" name="Toxicon">
        <title>Cloning and purification of alpha-neurotoxins from king cobra (Ophiophagus hannah).</title>
        <authorList>
            <person name="He Y.-Y."/>
            <person name="Lee W.-H."/>
            <person name="Zhang Y."/>
        </authorList>
    </citation>
    <scope>NUCLEOTIDE SEQUENCE [MRNA]</scope>
    <scope>PROTEIN SEQUENCE OF 22-36</scope>
    <scope>TOXIC DOSE</scope>
    <scope>SUBCELLULAR LOCATION</scope>
    <source>
        <tissue>Venom</tissue>
        <tissue>Venom gland</tissue>
    </source>
</reference>
<organism>
    <name type="scientific">Ophiophagus hannah</name>
    <name type="common">King cobra</name>
    <name type="synonym">Naja hannah</name>
    <dbReference type="NCBI Taxonomy" id="8665"/>
    <lineage>
        <taxon>Eukaryota</taxon>
        <taxon>Metazoa</taxon>
        <taxon>Chordata</taxon>
        <taxon>Craniata</taxon>
        <taxon>Vertebrata</taxon>
        <taxon>Euteleostomi</taxon>
        <taxon>Lepidosauria</taxon>
        <taxon>Squamata</taxon>
        <taxon>Bifurcata</taxon>
        <taxon>Unidentata</taxon>
        <taxon>Episquamata</taxon>
        <taxon>Toxicofera</taxon>
        <taxon>Serpentes</taxon>
        <taxon>Colubroidea</taxon>
        <taxon>Elapidae</taxon>
        <taxon>Elapinae</taxon>
        <taxon>Ophiophagus</taxon>
    </lineage>
</organism>
<accession>Q53B47</accession>
<comment type="function">
    <text evidence="2">This three-finger toxin binds and inhibits the nicotinic acetylcholine receptor (nAChR).</text>
</comment>
<comment type="subcellular location">
    <subcellularLocation>
        <location evidence="3">Secreted</location>
    </subcellularLocation>
</comment>
<comment type="tissue specificity">
    <text evidence="5">Expressed by the venom gland.</text>
</comment>
<comment type="toxic dose">
    <text evidence="3">LD(50) is 250 ug/kg by intraperitoneal injection into mice.</text>
</comment>
<comment type="miscellaneous">
    <text evidence="5">Is classified as a P-type cytotoxin, since a proline residue stands at position 49 (Pro-31 in standard classification).</text>
</comment>
<comment type="similarity">
    <text evidence="5">Belongs to the three-finger toxin family. Short-chain subfamily.</text>
</comment>
<proteinExistence type="evidence at protein level"/>
<keyword id="KW-0008">Acetylcholine receptor inhibiting toxin</keyword>
<keyword id="KW-0903">Direct protein sequencing</keyword>
<keyword id="KW-1015">Disulfide bond</keyword>
<keyword id="KW-0872">Ion channel impairing toxin</keyword>
<keyword id="KW-0528">Neurotoxin</keyword>
<keyword id="KW-0629">Postsynaptic neurotoxin</keyword>
<keyword id="KW-0964">Secreted</keyword>
<keyword id="KW-0732">Signal</keyword>
<keyword id="KW-0800">Toxin</keyword>
<name>3SX5_OPHHA</name>
<sequence length="78" mass="8944">MKNLLLTFLVVTIVCLDLGYTLICHRVHGLQTCEPDQKFCFRKTTMFFPNHPVLLMGCTYSCPTEKYSVCCSTDKCNK</sequence>
<evidence type="ECO:0000250" key="1">
    <source>
        <dbReference type="UniProtKB" id="P0DKR6"/>
    </source>
</evidence>
<evidence type="ECO:0000250" key="2">
    <source>
        <dbReference type="UniProtKB" id="P83302"/>
    </source>
</evidence>
<evidence type="ECO:0000269" key="3">
    <source>
    </source>
</evidence>
<evidence type="ECO:0000303" key="4">
    <source>
    </source>
</evidence>
<evidence type="ECO:0000305" key="5"/>
<evidence type="ECO:0000305" key="6">
    <source>
    </source>
</evidence>
<protein>
    <recommendedName>
        <fullName evidence="4">Short neurotoxin OH-5</fullName>
    </recommendedName>
    <alternativeName>
        <fullName>Three-finger toxin</fullName>
        <shortName>3FTx</shortName>
    </alternativeName>
</protein>